<keyword id="KW-0067">ATP-binding</keyword>
<keyword id="KW-1003">Cell membrane</keyword>
<keyword id="KW-0472">Membrane</keyword>
<keyword id="KW-0547">Nucleotide-binding</keyword>
<keyword id="KW-1278">Translocase</keyword>
<keyword id="KW-0813">Transport</keyword>
<sequence length="280" mass="31111">MGIEFKNVSYTYQAGTPFEGRALFDVNLKIEDASYTAFIGHTGSGKSTIMQLLNGLHIPTKGEVIVDDFSIKAGDKNKEIKFIRQKVGLVFQFPESQLFEETVLKDVAFGPQNFGISQIEAERLAEEKLRLVGISEDLFDKNPFELSGGQMRRVAIAGILAMEPKVLVLDEPTAGLDPKGRKELMTLFKNLHKKGMTIVLVTHLMDDVADYADYVYVLEAGKVTLSGQPKQIFQEVELLESKQLGVPKITKFAQRLSHKGLNLPSLPITINEFVEAIKHG</sequence>
<comment type="function">
    <text evidence="1">ATP-binding (A) component of a common energy-coupling factor (ECF) ABC-transporter complex. Unlike classic ABC transporters this ECF transporter provides the energy necessary to transport a number of different substrates.</text>
</comment>
<comment type="subunit">
    <text evidence="1">Forms a stable energy-coupling factor (ECF) transporter complex composed of 2 membrane-embedded substrate-binding proteins (S component), 2 ATP-binding proteins (A component) and 2 transmembrane proteins (T component).</text>
</comment>
<comment type="subcellular location">
    <subcellularLocation>
        <location evidence="1">Cell membrane</location>
        <topology evidence="1">Peripheral membrane protein</topology>
    </subcellularLocation>
</comment>
<comment type="similarity">
    <text evidence="1">Belongs to the ABC transporter superfamily. Energy-coupling factor EcfA family.</text>
</comment>
<proteinExistence type="inferred from homology"/>
<protein>
    <recommendedName>
        <fullName evidence="1">Energy-coupling factor transporter ATP-binding protein EcfA2</fullName>
        <shortName evidence="1">ECF transporter A component EcfA2</shortName>
        <ecNumber evidence="1">7.-.-.-</ecNumber>
    </recommendedName>
</protein>
<dbReference type="EC" id="7.-.-.-" evidence="1"/>
<dbReference type="EMBL" id="CP000114">
    <property type="protein sequence ID" value="ABA45374.1"/>
    <property type="molecule type" value="Genomic_DNA"/>
</dbReference>
<dbReference type="RefSeq" id="WP_000510606.1">
    <property type="nucleotide sequence ID" value="NC_007432.1"/>
</dbReference>
<dbReference type="SMR" id="Q3JYF5"/>
<dbReference type="KEGG" id="sak:SAK_2108"/>
<dbReference type="HOGENOM" id="CLU_000604_1_22_9"/>
<dbReference type="GO" id="GO:0043190">
    <property type="term" value="C:ATP-binding cassette (ABC) transporter complex"/>
    <property type="evidence" value="ECO:0007669"/>
    <property type="project" value="TreeGrafter"/>
</dbReference>
<dbReference type="GO" id="GO:0005524">
    <property type="term" value="F:ATP binding"/>
    <property type="evidence" value="ECO:0007669"/>
    <property type="project" value="UniProtKB-KW"/>
</dbReference>
<dbReference type="GO" id="GO:0016887">
    <property type="term" value="F:ATP hydrolysis activity"/>
    <property type="evidence" value="ECO:0007669"/>
    <property type="project" value="InterPro"/>
</dbReference>
<dbReference type="GO" id="GO:0042626">
    <property type="term" value="F:ATPase-coupled transmembrane transporter activity"/>
    <property type="evidence" value="ECO:0007669"/>
    <property type="project" value="TreeGrafter"/>
</dbReference>
<dbReference type="CDD" id="cd03225">
    <property type="entry name" value="ABC_cobalt_CbiO_domain1"/>
    <property type="match status" value="1"/>
</dbReference>
<dbReference type="FunFam" id="3.40.50.300:FF:000224">
    <property type="entry name" value="Energy-coupling factor transporter ATP-binding protein EcfA"/>
    <property type="match status" value="1"/>
</dbReference>
<dbReference type="Gene3D" id="3.40.50.300">
    <property type="entry name" value="P-loop containing nucleotide triphosphate hydrolases"/>
    <property type="match status" value="1"/>
</dbReference>
<dbReference type="InterPro" id="IPR003593">
    <property type="entry name" value="AAA+_ATPase"/>
</dbReference>
<dbReference type="InterPro" id="IPR003439">
    <property type="entry name" value="ABC_transporter-like_ATP-bd"/>
</dbReference>
<dbReference type="InterPro" id="IPR017871">
    <property type="entry name" value="ABC_transporter-like_CS"/>
</dbReference>
<dbReference type="InterPro" id="IPR015856">
    <property type="entry name" value="ABC_transpr_CbiO/EcfA_su"/>
</dbReference>
<dbReference type="InterPro" id="IPR050095">
    <property type="entry name" value="ECF_ABC_transporter_ATP-bd"/>
</dbReference>
<dbReference type="InterPro" id="IPR030946">
    <property type="entry name" value="EcfA2"/>
</dbReference>
<dbReference type="InterPro" id="IPR027417">
    <property type="entry name" value="P-loop_NTPase"/>
</dbReference>
<dbReference type="NCBIfam" id="TIGR04521">
    <property type="entry name" value="ECF_ATPase_2"/>
    <property type="match status" value="1"/>
</dbReference>
<dbReference type="PANTHER" id="PTHR43553:SF27">
    <property type="entry name" value="ENERGY-COUPLING FACTOR TRANSPORTER ATP-BINDING PROTEIN ECFA2"/>
    <property type="match status" value="1"/>
</dbReference>
<dbReference type="PANTHER" id="PTHR43553">
    <property type="entry name" value="HEAVY METAL TRANSPORTER"/>
    <property type="match status" value="1"/>
</dbReference>
<dbReference type="Pfam" id="PF00005">
    <property type="entry name" value="ABC_tran"/>
    <property type="match status" value="1"/>
</dbReference>
<dbReference type="SMART" id="SM00382">
    <property type="entry name" value="AAA"/>
    <property type="match status" value="1"/>
</dbReference>
<dbReference type="SUPFAM" id="SSF52540">
    <property type="entry name" value="P-loop containing nucleoside triphosphate hydrolases"/>
    <property type="match status" value="1"/>
</dbReference>
<dbReference type="PROSITE" id="PS00211">
    <property type="entry name" value="ABC_TRANSPORTER_1"/>
    <property type="match status" value="1"/>
</dbReference>
<dbReference type="PROSITE" id="PS50893">
    <property type="entry name" value="ABC_TRANSPORTER_2"/>
    <property type="match status" value="1"/>
</dbReference>
<dbReference type="PROSITE" id="PS51246">
    <property type="entry name" value="CBIO"/>
    <property type="match status" value="1"/>
</dbReference>
<gene>
    <name evidence="1" type="primary">ecfA2</name>
    <name type="synonym">cbiO2</name>
    <name type="ordered locus">SAK_2108</name>
</gene>
<evidence type="ECO:0000255" key="1">
    <source>
        <dbReference type="HAMAP-Rule" id="MF_01710"/>
    </source>
</evidence>
<name>ECFA2_STRA1</name>
<reference key="1">
    <citation type="journal article" date="2005" name="Proc. Natl. Acad. Sci. U.S.A.">
        <title>Genome analysis of multiple pathogenic isolates of Streptococcus agalactiae: implications for the microbial 'pan-genome'.</title>
        <authorList>
            <person name="Tettelin H."/>
            <person name="Masignani V."/>
            <person name="Cieslewicz M.J."/>
            <person name="Donati C."/>
            <person name="Medini D."/>
            <person name="Ward N.L."/>
            <person name="Angiuoli S.V."/>
            <person name="Crabtree J."/>
            <person name="Jones A.L."/>
            <person name="Durkin A.S."/>
            <person name="DeBoy R.T."/>
            <person name="Davidsen T.M."/>
            <person name="Mora M."/>
            <person name="Scarselli M."/>
            <person name="Margarit y Ros I."/>
            <person name="Peterson J.D."/>
            <person name="Hauser C.R."/>
            <person name="Sundaram J.P."/>
            <person name="Nelson W.C."/>
            <person name="Madupu R."/>
            <person name="Brinkac L.M."/>
            <person name="Dodson R.J."/>
            <person name="Rosovitz M.J."/>
            <person name="Sullivan S.A."/>
            <person name="Daugherty S.C."/>
            <person name="Haft D.H."/>
            <person name="Selengut J."/>
            <person name="Gwinn M.L."/>
            <person name="Zhou L."/>
            <person name="Zafar N."/>
            <person name="Khouri H."/>
            <person name="Radune D."/>
            <person name="Dimitrov G."/>
            <person name="Watkins K."/>
            <person name="O'Connor K.J."/>
            <person name="Smith S."/>
            <person name="Utterback T.R."/>
            <person name="White O."/>
            <person name="Rubens C.E."/>
            <person name="Grandi G."/>
            <person name="Madoff L.C."/>
            <person name="Kasper D.L."/>
            <person name="Telford J.L."/>
            <person name="Wessels M.R."/>
            <person name="Rappuoli R."/>
            <person name="Fraser C.M."/>
        </authorList>
    </citation>
    <scope>NUCLEOTIDE SEQUENCE [LARGE SCALE GENOMIC DNA]</scope>
    <source>
        <strain>ATCC 27591 / A909 / CDC SS700</strain>
    </source>
</reference>
<feature type="chain" id="PRO_0000287991" description="Energy-coupling factor transporter ATP-binding protein EcfA2">
    <location>
        <begin position="1"/>
        <end position="280"/>
    </location>
</feature>
<feature type="domain" description="ABC transporter" evidence="1">
    <location>
        <begin position="3"/>
        <end position="245"/>
    </location>
</feature>
<feature type="binding site" evidence="1">
    <location>
        <begin position="40"/>
        <end position="47"/>
    </location>
    <ligand>
        <name>ATP</name>
        <dbReference type="ChEBI" id="CHEBI:30616"/>
    </ligand>
</feature>
<accession>Q3JYF5</accession>
<organism>
    <name type="scientific">Streptococcus agalactiae serotype Ia (strain ATCC 27591 / A909 / CDC SS700)</name>
    <dbReference type="NCBI Taxonomy" id="205921"/>
    <lineage>
        <taxon>Bacteria</taxon>
        <taxon>Bacillati</taxon>
        <taxon>Bacillota</taxon>
        <taxon>Bacilli</taxon>
        <taxon>Lactobacillales</taxon>
        <taxon>Streptococcaceae</taxon>
        <taxon>Streptococcus</taxon>
    </lineage>
</organism>